<evidence type="ECO:0000255" key="1">
    <source>
        <dbReference type="HAMAP-Rule" id="MF_00291"/>
    </source>
</evidence>
<evidence type="ECO:0000305" key="2"/>
<proteinExistence type="inferred from homology"/>
<name>RS2_METMJ</name>
<feature type="chain" id="PRO_0000352068" description="Small ribosomal subunit protein uS2">
    <location>
        <begin position="1"/>
        <end position="205"/>
    </location>
</feature>
<accession>A3CWI6</accession>
<protein>
    <recommendedName>
        <fullName evidence="1">Small ribosomal subunit protein uS2</fullName>
    </recommendedName>
    <alternativeName>
        <fullName evidence="2">30S ribosomal protein S2</fullName>
    </alternativeName>
</protein>
<gene>
    <name evidence="1" type="primary">rps2</name>
    <name type="ordered locus">Memar_1810</name>
</gene>
<dbReference type="EMBL" id="CP000562">
    <property type="protein sequence ID" value="ABN57736.1"/>
    <property type="molecule type" value="Genomic_DNA"/>
</dbReference>
<dbReference type="RefSeq" id="WP_011844645.1">
    <property type="nucleotide sequence ID" value="NC_009051.1"/>
</dbReference>
<dbReference type="SMR" id="A3CWI6"/>
<dbReference type="STRING" id="368407.Memar_1810"/>
<dbReference type="GeneID" id="4848313"/>
<dbReference type="KEGG" id="mem:Memar_1810"/>
<dbReference type="eggNOG" id="arCOG04245">
    <property type="taxonomic scope" value="Archaea"/>
</dbReference>
<dbReference type="HOGENOM" id="CLU_058171_3_0_2"/>
<dbReference type="OrthoDB" id="371797at2157"/>
<dbReference type="Proteomes" id="UP000002146">
    <property type="component" value="Chromosome"/>
</dbReference>
<dbReference type="GO" id="GO:0015935">
    <property type="term" value="C:small ribosomal subunit"/>
    <property type="evidence" value="ECO:0007669"/>
    <property type="project" value="InterPro"/>
</dbReference>
<dbReference type="GO" id="GO:0003735">
    <property type="term" value="F:structural constituent of ribosome"/>
    <property type="evidence" value="ECO:0007669"/>
    <property type="project" value="InterPro"/>
</dbReference>
<dbReference type="GO" id="GO:0006412">
    <property type="term" value="P:translation"/>
    <property type="evidence" value="ECO:0007669"/>
    <property type="project" value="UniProtKB-UniRule"/>
</dbReference>
<dbReference type="CDD" id="cd01425">
    <property type="entry name" value="RPS2"/>
    <property type="match status" value="1"/>
</dbReference>
<dbReference type="FunFam" id="3.40.50.10490:FF:000030">
    <property type="entry name" value="30S ribosomal protein S2"/>
    <property type="match status" value="1"/>
</dbReference>
<dbReference type="Gene3D" id="3.40.50.10490">
    <property type="entry name" value="Glucose-6-phosphate isomerase like protein, domain 1"/>
    <property type="match status" value="1"/>
</dbReference>
<dbReference type="HAMAP" id="MF_00291_A">
    <property type="entry name" value="Ribosomal_uS2_A"/>
    <property type="match status" value="1"/>
</dbReference>
<dbReference type="InterPro" id="IPR001865">
    <property type="entry name" value="Ribosomal_uS2"/>
</dbReference>
<dbReference type="InterPro" id="IPR023454">
    <property type="entry name" value="Ribosomal_uS2_arc"/>
</dbReference>
<dbReference type="InterPro" id="IPR018130">
    <property type="entry name" value="Ribosomal_uS2_CS"/>
</dbReference>
<dbReference type="InterPro" id="IPR005707">
    <property type="entry name" value="Ribosomal_uS2_euk/arc"/>
</dbReference>
<dbReference type="InterPro" id="IPR023591">
    <property type="entry name" value="Ribosomal_uS2_flav_dom_sf"/>
</dbReference>
<dbReference type="NCBIfam" id="TIGR01012">
    <property type="entry name" value="uS2_euk_arch"/>
    <property type="match status" value="1"/>
</dbReference>
<dbReference type="PANTHER" id="PTHR11489">
    <property type="entry name" value="40S RIBOSOMAL PROTEIN SA"/>
    <property type="match status" value="1"/>
</dbReference>
<dbReference type="Pfam" id="PF00318">
    <property type="entry name" value="Ribosomal_S2"/>
    <property type="match status" value="2"/>
</dbReference>
<dbReference type="PRINTS" id="PR00395">
    <property type="entry name" value="RIBOSOMALS2"/>
</dbReference>
<dbReference type="SUPFAM" id="SSF52313">
    <property type="entry name" value="Ribosomal protein S2"/>
    <property type="match status" value="1"/>
</dbReference>
<dbReference type="PROSITE" id="PS00962">
    <property type="entry name" value="RIBOSOMAL_S2_1"/>
    <property type="match status" value="1"/>
</dbReference>
<dbReference type="PROSITE" id="PS00963">
    <property type="entry name" value="RIBOSOMAL_S2_2"/>
    <property type="match status" value="1"/>
</dbReference>
<keyword id="KW-0687">Ribonucleoprotein</keyword>
<keyword id="KW-0689">Ribosomal protein</keyword>
<comment type="similarity">
    <text evidence="1">Belongs to the universal ribosomal protein uS2 family.</text>
</comment>
<reference key="1">
    <citation type="journal article" date="2009" name="Stand. Genomic Sci.">
        <title>Complete genome sequence of Methanoculleus marisnigri Romesser et al. 1981 type strain JR1.</title>
        <authorList>
            <person name="Anderson I.J."/>
            <person name="Sieprawska-Lupa M."/>
            <person name="Lapidus A."/>
            <person name="Nolan M."/>
            <person name="Copeland A."/>
            <person name="Glavina Del Rio T."/>
            <person name="Tice H."/>
            <person name="Dalin E."/>
            <person name="Barry K."/>
            <person name="Saunders E."/>
            <person name="Han C."/>
            <person name="Brettin T."/>
            <person name="Detter J.C."/>
            <person name="Bruce D."/>
            <person name="Mikhailova N."/>
            <person name="Pitluck S."/>
            <person name="Hauser L."/>
            <person name="Land M."/>
            <person name="Lucas S."/>
            <person name="Richardson P."/>
            <person name="Whitman W.B."/>
            <person name="Kyrpides N.C."/>
        </authorList>
    </citation>
    <scope>NUCLEOTIDE SEQUENCE [LARGE SCALE GENOMIC DNA]</scope>
    <source>
        <strain>ATCC 35101 / DSM 1498 / JR1</strain>
    </source>
</reference>
<sequence length="205" mass="22794">MTGNELEIELKEPLLPVEEYLAAGVHIGTQQKSKDMMKFIYRVRGDGLYILDIQATDERIKTAAKFLSQYEPSKILVVTSRQYGQYPAKKFADAIGGMAVVGRFIPGMLTNQRLHGLNKYIEPDVVVVTDPIGDSQTIAEAVQVGIPIVALCDTNNMTKYVDVVIPTNNKGRKALSVIYYLLTKELLRLRGVATSLTPEDFETEL</sequence>
<organism>
    <name type="scientific">Methanoculleus marisnigri (strain ATCC 35101 / DSM 1498 / JR1)</name>
    <dbReference type="NCBI Taxonomy" id="368407"/>
    <lineage>
        <taxon>Archaea</taxon>
        <taxon>Methanobacteriati</taxon>
        <taxon>Methanobacteriota</taxon>
        <taxon>Stenosarchaea group</taxon>
        <taxon>Methanomicrobia</taxon>
        <taxon>Methanomicrobiales</taxon>
        <taxon>Methanomicrobiaceae</taxon>
        <taxon>Methanoculleus</taxon>
    </lineage>
</organism>